<gene>
    <name type="primary">Rhbdl1</name>
    <name type="synonym">Rhbdl</name>
</gene>
<organism>
    <name type="scientific">Rattus norvegicus</name>
    <name type="common">Rat</name>
    <dbReference type="NCBI Taxonomy" id="10116"/>
    <lineage>
        <taxon>Eukaryota</taxon>
        <taxon>Metazoa</taxon>
        <taxon>Chordata</taxon>
        <taxon>Craniata</taxon>
        <taxon>Vertebrata</taxon>
        <taxon>Euteleostomi</taxon>
        <taxon>Mammalia</taxon>
        <taxon>Eutheria</taxon>
        <taxon>Euarchontoglires</taxon>
        <taxon>Glires</taxon>
        <taxon>Rodentia</taxon>
        <taxon>Myomorpha</taxon>
        <taxon>Muroidea</taxon>
        <taxon>Muridae</taxon>
        <taxon>Murinae</taxon>
        <taxon>Rattus</taxon>
    </lineage>
</organism>
<reference key="1">
    <citation type="journal article" date="1998" name="FEBS Lett.">
        <title>Characterization of a mammalian cDNA encoding a protein with high sequence similarity to the Drosophila regulatory protein Rhomboid.</title>
        <authorList>
            <person name="Pascall J.C."/>
            <person name="Brown K.D."/>
        </authorList>
    </citation>
    <scope>NUCLEOTIDE SEQUENCE [MRNA]</scope>
    <source>
        <tissue>Intestinal epithelium</tissue>
    </source>
</reference>
<keyword id="KW-0378">Hydrolase</keyword>
<keyword id="KW-0472">Membrane</keyword>
<keyword id="KW-0645">Protease</keyword>
<keyword id="KW-1185">Reference proteome</keyword>
<keyword id="KW-0720">Serine protease</keyword>
<keyword id="KW-0812">Transmembrane</keyword>
<keyword id="KW-1133">Transmembrane helix</keyword>
<protein>
    <recommendedName>
        <fullName>Rhomboid-related protein 1</fullName>
        <shortName>RRP</shortName>
        <ecNumber>3.4.21.105</ecNumber>
    </recommendedName>
    <alternativeName>
        <fullName>Rhomboid-like protein 1</fullName>
    </alternativeName>
</protein>
<proteinExistence type="evidence at transcript level"/>
<feature type="chain" id="PRO_0000206175" description="Rhomboid-related protein 1">
    <location>
        <begin position="1" status="less than"/>
        <end position="164" status="greater than"/>
    </location>
</feature>
<feature type="transmembrane region" description="Helical" evidence="2">
    <location>
        <begin position="10"/>
        <end position="30"/>
    </location>
</feature>
<feature type="transmembrane region" description="Helical" evidence="2">
    <location>
        <begin position="32"/>
        <end position="52"/>
    </location>
</feature>
<feature type="transmembrane region" description="Helical" evidence="2">
    <location>
        <begin position="56"/>
        <end position="76"/>
    </location>
</feature>
<feature type="transmembrane region" description="Helical" evidence="2">
    <location>
        <begin position="120"/>
        <end position="140"/>
    </location>
</feature>
<feature type="active site" description="Nucleophile" evidence="1">
    <location>
        <position position="60"/>
    </location>
</feature>
<feature type="active site" evidence="1">
    <location>
        <position position="125"/>
    </location>
</feature>
<feature type="non-terminal residue">
    <location>
        <position position="1"/>
    </location>
</feature>
<feature type="non-terminal residue">
    <location>
        <position position="164"/>
    </location>
</feature>
<dbReference type="EC" id="3.4.21.105"/>
<dbReference type="EMBL" id="Y17258">
    <property type="protein sequence ID" value="CAA76716.1"/>
    <property type="molecule type" value="mRNA"/>
</dbReference>
<dbReference type="SMR" id="O88779"/>
<dbReference type="STRING" id="10116.ENSRNOP00000026971"/>
<dbReference type="MEROPS" id="S54.005"/>
<dbReference type="PhosphoSitePlus" id="O88779"/>
<dbReference type="PaxDb" id="10116-ENSRNOP00000026971"/>
<dbReference type="UCSC" id="RGD:620699">
    <property type="organism name" value="rat"/>
</dbReference>
<dbReference type="AGR" id="RGD:620699"/>
<dbReference type="RGD" id="620699">
    <property type="gene designation" value="Rhbdl1"/>
</dbReference>
<dbReference type="eggNOG" id="KOG2289">
    <property type="taxonomic scope" value="Eukaryota"/>
</dbReference>
<dbReference type="InParanoid" id="O88779"/>
<dbReference type="PhylomeDB" id="O88779"/>
<dbReference type="Proteomes" id="UP000002494">
    <property type="component" value="Unplaced"/>
</dbReference>
<dbReference type="GO" id="GO:0016020">
    <property type="term" value="C:membrane"/>
    <property type="evidence" value="ECO:0007669"/>
    <property type="project" value="UniProtKB-SubCell"/>
</dbReference>
<dbReference type="GO" id="GO:0004252">
    <property type="term" value="F:serine-type endopeptidase activity"/>
    <property type="evidence" value="ECO:0007669"/>
    <property type="project" value="InterPro"/>
</dbReference>
<dbReference type="GO" id="GO:0006508">
    <property type="term" value="P:proteolysis"/>
    <property type="evidence" value="ECO:0007669"/>
    <property type="project" value="UniProtKB-KW"/>
</dbReference>
<dbReference type="Gene3D" id="1.20.1540.10">
    <property type="entry name" value="Rhomboid-like"/>
    <property type="match status" value="1"/>
</dbReference>
<dbReference type="InterPro" id="IPR022764">
    <property type="entry name" value="Peptidase_S54_rhomboid_dom"/>
</dbReference>
<dbReference type="InterPro" id="IPR035952">
    <property type="entry name" value="Rhomboid-like_sf"/>
</dbReference>
<dbReference type="InterPro" id="IPR051739">
    <property type="entry name" value="Rhomboid_IM_Serine_Proteases"/>
</dbReference>
<dbReference type="PANTHER" id="PTHR45840">
    <property type="entry name" value="RHOMBOID-RELATED PROTEIN"/>
    <property type="match status" value="1"/>
</dbReference>
<dbReference type="PANTHER" id="PTHR45840:SF4">
    <property type="entry name" value="RHOMBOID-RELATED PROTEIN 1"/>
    <property type="match status" value="1"/>
</dbReference>
<dbReference type="Pfam" id="PF01694">
    <property type="entry name" value="Rhomboid"/>
    <property type="match status" value="1"/>
</dbReference>
<dbReference type="SUPFAM" id="SSF144091">
    <property type="entry name" value="Rhomboid-like"/>
    <property type="match status" value="1"/>
</dbReference>
<evidence type="ECO:0000250" key="1"/>
<evidence type="ECO:0000255" key="2"/>
<evidence type="ECO:0000305" key="3"/>
<name>RHBL1_RAT</name>
<comment type="function">
    <text evidence="1">May be involved in regulated intramembrane proteolysis and the subsequent release of functional polypeptides from their membrane anchors.</text>
</comment>
<comment type="catalytic activity">
    <reaction>
        <text>Cleaves type-1 transmembrane domains using a catalytic dyad composed of serine and histidine that are contributed by different transmembrane domains.</text>
        <dbReference type="EC" id="3.4.21.105"/>
    </reaction>
</comment>
<comment type="subcellular location">
    <subcellularLocation>
        <location>Membrane</location>
        <topology>Multi-pass membrane protein</topology>
    </subcellularLocation>
</comment>
<comment type="similarity">
    <text evidence="3">Belongs to the peptidase S54 family.</text>
</comment>
<accession>O88779</accession>
<sequence length="164" mass="17662">FMHVGLEQLGFNALLQLMIGVPLEMVHGVLRISLLYLAGVLAGSLTVSITDMRAPVVGGSGGVYALCSAHLANVVMNWAGMRCPYKLLRMVLALVCMSSEVGRAVWLRFSPPLPASGPQPSFMAHLAGAVVGVSMGLTILRSYEERLRDQCGWWVVLLAYGTFL</sequence>